<name>IRS5_IXORI</name>
<sequence>MKTLIVLMCSLVVVWARYENEMRLANNRFAVDLLRGLPSSPEKNIFFSPYSISTAMGMVFAGAKGETLKNLYDGFGYLRSGLKEDWVLQAYADHAKQLQVGQSQSTFDVANAAAIHERLALLSAYENTLDSTFHAQLLKVDFVNGGPAAIDEINRWVKQKTHDKIDKLFDGPLDPLTRLVLLNAIFFKGVWSTKFDENATTKKQFLNGGTTPTQVDTMTKSIRIGYKLLPTMRLEIAELPYDGGNYSMVILLPRGSEGIEAFKHSLTDHRLQDYIGHVELREVAVSLPKFKLETEYSLKDSLKSLGITEIFGTQADLSGISSDGELVVSDVVHKAVVEVNEEGTEAAAVSGVAVVTRLIEVPTLELNVNQPFLFFIRNTHTKDLLFAGQVNHL</sequence>
<evidence type="ECO:0000250" key="1">
    <source>
        <dbReference type="UniProtKB" id="Q06B72"/>
    </source>
</evidence>
<evidence type="ECO:0000255" key="2"/>
<evidence type="ECO:0000255" key="3">
    <source>
        <dbReference type="PROSITE-ProRule" id="PRU00498"/>
    </source>
</evidence>
<evidence type="ECO:0000269" key="4">
    <source>
    </source>
</evidence>
<evidence type="ECO:0000303" key="5">
    <source>
    </source>
</evidence>
<evidence type="ECO:0000305" key="6"/>
<evidence type="ECO:0000312" key="7">
    <source>
        <dbReference type="EMBL" id="JAA71154.1"/>
    </source>
</evidence>
<evidence type="ECO:0000312" key="8">
    <source>
        <dbReference type="EMBL" id="JAA71155.1"/>
    </source>
</evidence>
<evidence type="ECO:0007744" key="9">
    <source>
        <dbReference type="PDB" id="7B2T"/>
    </source>
</evidence>
<organism evidence="8">
    <name type="scientific">Ixodes ricinus</name>
    <name type="common">Common tick</name>
    <name type="synonym">Acarus ricinus</name>
    <dbReference type="NCBI Taxonomy" id="34613"/>
    <lineage>
        <taxon>Eukaryota</taxon>
        <taxon>Metazoa</taxon>
        <taxon>Ecdysozoa</taxon>
        <taxon>Arthropoda</taxon>
        <taxon>Chelicerata</taxon>
        <taxon>Arachnida</taxon>
        <taxon>Acari</taxon>
        <taxon>Parasitiformes</taxon>
        <taxon>Ixodida</taxon>
        <taxon>Ixodoidea</taxon>
        <taxon>Ixodidae</taxon>
        <taxon>Ixodinae</taxon>
        <taxon>Ixodes</taxon>
    </lineage>
</organism>
<comment type="function">
    <text evidence="4">Serine protease inhibitor that modulates blood feeding of ticks on vertebrate species (PubMed:34473088). Inhibits host neutrophil elastase (ELANE) and proteinase 3/myeloblastin (PRTN3) (PubMed:34473088). Moderately inhibits host chymase, cathepsin G (CTSG), trypsin and alpha-chymotrypsin (PubMed:34473088). Decreases host neutrophil migration (PubMed:34473088). Decreases nitric oxide production by host macrophages (PubMed:34473088). Decreases host complement activity (PubMed:34473088).</text>
</comment>
<comment type="subcellular location">
    <subcellularLocation>
        <location evidence="1">Secreted</location>
    </subcellularLocation>
</comment>
<comment type="tissue specificity">
    <text evidence="4">Highly expressed in female salivary gland during blood feeding (PubMed:34473088). Expressed in female midgut and ovary during blood feeding (PubMed:34473088).</text>
</comment>
<comment type="developmental stage">
    <text evidence="4">Highly expressed in semi-engorged and fully engorged nymphs.</text>
</comment>
<comment type="induction">
    <text evidence="4">Induced by blood feeding.</text>
</comment>
<comment type="similarity">
    <text evidence="6">Belongs to the serpin family.</text>
</comment>
<keyword id="KW-0002">3D-structure</keyword>
<keyword id="KW-1216">Complement system impairing toxin</keyword>
<keyword id="KW-0325">Glycoprotein</keyword>
<keyword id="KW-0391">Immunity</keyword>
<keyword id="KW-0646">Protease inhibitor</keyword>
<keyword id="KW-0964">Secreted</keyword>
<keyword id="KW-0722">Serine protease inhibitor</keyword>
<keyword id="KW-0732">Signal</keyword>
<keyword id="KW-0800">Toxin</keyword>
<dbReference type="EMBL" id="GADI01002653">
    <property type="protein sequence ID" value="JAA71155.1"/>
    <property type="molecule type" value="mRNA"/>
</dbReference>
<dbReference type="EMBL" id="GADI01002654">
    <property type="protein sequence ID" value="JAA71154.1"/>
    <property type="molecule type" value="mRNA"/>
</dbReference>
<dbReference type="PDB" id="7B2T">
    <property type="method" value="X-ray"/>
    <property type="resolution" value="1.50 A"/>
    <property type="chains" value="A/B=17-357"/>
</dbReference>
<dbReference type="PDBsum" id="7B2T"/>
<dbReference type="SMR" id="A0A0K8RJ89"/>
<dbReference type="GO" id="GO:0005615">
    <property type="term" value="C:extracellular space"/>
    <property type="evidence" value="ECO:0007669"/>
    <property type="project" value="InterPro"/>
</dbReference>
<dbReference type="GO" id="GO:0004867">
    <property type="term" value="F:serine-type endopeptidase inhibitor activity"/>
    <property type="evidence" value="ECO:0007669"/>
    <property type="project" value="UniProtKB-KW"/>
</dbReference>
<dbReference type="GO" id="GO:0090729">
    <property type="term" value="F:toxin activity"/>
    <property type="evidence" value="ECO:0007669"/>
    <property type="project" value="UniProtKB-KW"/>
</dbReference>
<dbReference type="GO" id="GO:0002376">
    <property type="term" value="P:immune system process"/>
    <property type="evidence" value="ECO:0007669"/>
    <property type="project" value="UniProtKB-KW"/>
</dbReference>
<dbReference type="CDD" id="cd19577">
    <property type="entry name" value="serpinJ_IRS-2-like"/>
    <property type="match status" value="1"/>
</dbReference>
<dbReference type="FunFam" id="3.30.497.10:FF:000031">
    <property type="entry name" value="Putative salivary serpin"/>
    <property type="match status" value="2"/>
</dbReference>
<dbReference type="Gene3D" id="2.30.39.10">
    <property type="entry name" value="Alpha-1-antitrypsin, domain 1"/>
    <property type="match status" value="1"/>
</dbReference>
<dbReference type="Gene3D" id="3.30.497.10">
    <property type="entry name" value="Antithrombin, subunit I, domain 2"/>
    <property type="match status" value="1"/>
</dbReference>
<dbReference type="InterPro" id="IPR023795">
    <property type="entry name" value="Serpin_CS"/>
</dbReference>
<dbReference type="InterPro" id="IPR023796">
    <property type="entry name" value="Serpin_dom"/>
</dbReference>
<dbReference type="InterPro" id="IPR000215">
    <property type="entry name" value="Serpin_fam"/>
</dbReference>
<dbReference type="InterPro" id="IPR036186">
    <property type="entry name" value="Serpin_sf"/>
</dbReference>
<dbReference type="InterPro" id="IPR042178">
    <property type="entry name" value="Serpin_sf_1"/>
</dbReference>
<dbReference type="InterPro" id="IPR042185">
    <property type="entry name" value="Serpin_sf_2"/>
</dbReference>
<dbReference type="PANTHER" id="PTHR11461:SF211">
    <property type="entry name" value="GH10112P-RELATED"/>
    <property type="match status" value="1"/>
</dbReference>
<dbReference type="PANTHER" id="PTHR11461">
    <property type="entry name" value="SERINE PROTEASE INHIBITOR, SERPIN"/>
    <property type="match status" value="1"/>
</dbReference>
<dbReference type="Pfam" id="PF00079">
    <property type="entry name" value="Serpin"/>
    <property type="match status" value="1"/>
</dbReference>
<dbReference type="SMART" id="SM00093">
    <property type="entry name" value="SERPIN"/>
    <property type="match status" value="1"/>
</dbReference>
<dbReference type="SUPFAM" id="SSF56574">
    <property type="entry name" value="Serpins"/>
    <property type="match status" value="1"/>
</dbReference>
<dbReference type="PROSITE" id="PS00284">
    <property type="entry name" value="SERPIN"/>
    <property type="match status" value="1"/>
</dbReference>
<protein>
    <recommendedName>
        <fullName evidence="5">Iripin-5</fullName>
    </recommendedName>
</protein>
<reference evidence="7 8" key="1">
    <citation type="submission" date="2012-12" db="EMBL/GenBank/DDBJ databases">
        <title>De novo Ixodes ricinus salivary transcriptome analysis using two different next generation sequencing methodologies.</title>
        <authorList>
            <person name="Schwarz A."/>
            <person name="von Reumont B.M."/>
            <person name="Erhart J."/>
            <person name="Chagas A.C."/>
            <person name="Ribeiro J.M.C."/>
            <person name="Kotsyfakis M."/>
        </authorList>
    </citation>
    <scope>NUCLEOTIDE SEQUENCE [LARGE SCALE MRNA]</scope>
    <source>
        <tissue evidence="7 8">Salivary gland</tissue>
    </source>
</reference>
<reference evidence="9" key="2">
    <citation type="journal article" date="2021" name="Acta Crystallogr. D Struct. Biol.">
        <title>Structural and biochemical characterization of the novel serpin Iripin-5 from Ixodes ricinus.</title>
        <authorList>
            <person name="Kascakova B."/>
            <person name="Kotal J."/>
            <person name="Martins L.A."/>
            <person name="Berankova Z."/>
            <person name="Langhansova H."/>
            <person name="Calvo E."/>
            <person name="Crossley J.A."/>
            <person name="Havlickova P."/>
            <person name="Dycka F."/>
            <person name="Prudnikova T."/>
            <person name="Kuty M."/>
            <person name="Kotsyfakis M."/>
            <person name="Chmelar J."/>
            <person name="Kuta Smatanova I."/>
        </authorList>
    </citation>
    <scope>X-RAY CRYSTALLOGRAPHY (1.50 ANGSTROMS) OF 17-357</scope>
    <scope>FUNCTION</scope>
    <scope>TISSUE SPECIFICITY</scope>
    <scope>DEVELOPMENTAL STAGE</scope>
    <scope>INDUCTION BY BLOOD FEEDING</scope>
</reference>
<accession>A0A0K8RJ89</accession>
<accession>A0A0K8RKU6</accession>
<feature type="signal peptide" evidence="2">
    <location>
        <begin position="1"/>
        <end position="16"/>
    </location>
</feature>
<feature type="chain" id="PRO_5005518268" description="Iripin-5" evidence="2">
    <location>
        <begin position="17"/>
        <end position="393"/>
    </location>
</feature>
<feature type="glycosylation site" description="N-linked (GlcNAc...) asparagine" evidence="3">
    <location>
        <position position="198"/>
    </location>
</feature>
<feature type="glycosylation site" description="N-linked (GlcNAc...) asparagine" evidence="3">
    <location>
        <position position="245"/>
    </location>
</feature>
<feature type="sequence conflict" description="In Ref. 1; JAA71154." evidence="6" ref="1">
    <original>E</original>
    <variation>Q</variation>
    <location>
        <position position="21"/>
    </location>
</feature>
<feature type="sequence conflict" description="In Ref. 1; JAA71154." evidence="6" ref="1">
    <original>D</original>
    <variation>G</variation>
    <location>
        <position position="32"/>
    </location>
</feature>
<feature type="sequence conflict" description="In Ref. 1; JAA71154." evidence="6" ref="1">
    <original>S</original>
    <variation>L</variation>
    <location>
        <position position="105"/>
    </location>
</feature>
<feature type="sequence conflict" description="In Ref. 1; JAA71154." evidence="6" ref="1">
    <original>A</original>
    <variation>S</variation>
    <location>
        <position position="120"/>
    </location>
</feature>
<feature type="sequence conflict" description="In Ref. 1; JAA71154." evidence="6" ref="1">
    <original>NTLD</original>
    <variation>STLN</variation>
    <location>
        <begin position="127"/>
        <end position="130"/>
    </location>
</feature>
<feature type="sequence conflict" description="In Ref. 1; JAA71154." evidence="6" ref="1">
    <original>V</original>
    <variation>L</variation>
    <location>
        <position position="140"/>
    </location>
</feature>
<feature type="sequence conflict" description="In Ref. 1; JAA71154." evidence="6" ref="1">
    <original>I</original>
    <variation>V</variation>
    <location>
        <position position="150"/>
    </location>
</feature>
<feature type="sequence conflict" description="In Ref. 1; JAA71154." evidence="6" ref="1">
    <original>KLFD</original>
    <variation>TLFN</variation>
    <location>
        <begin position="167"/>
        <end position="170"/>
    </location>
</feature>
<feature type="sequence conflict" description="In Ref. 1; JAA71154." evidence="6" ref="1">
    <original>M</original>
    <variation>L</variation>
    <location>
        <position position="232"/>
    </location>
</feature>
<proteinExistence type="evidence at protein level"/>